<comment type="function">
    <text evidence="1">Electron transfer subunit of the periplasmic nitrate reductase complex NapAB. Receives electrons from the membrane-anchored tetraheme c-type NapC protein and transfers these to NapA subunit, thus allowing electron flow between membrane and periplasm. Essential for periplasmic nitrate reduction with nitrate as the terminal electron acceptor (By similarity).</text>
</comment>
<comment type="subunit">
    <text evidence="1">Component of the periplasmic nitrate reductase NapAB complex composed of NapA and NapB.</text>
</comment>
<comment type="subcellular location">
    <subcellularLocation>
        <location evidence="1">Periplasm</location>
    </subcellularLocation>
</comment>
<comment type="PTM">
    <text evidence="1">Binds 2 heme C groups per subunit.</text>
</comment>
<comment type="similarity">
    <text evidence="3">Belongs to the NapB family.</text>
</comment>
<dbReference type="EMBL" id="AE005674">
    <property type="protein sequence ID" value="AAN43806.2"/>
    <property type="molecule type" value="Genomic_DNA"/>
</dbReference>
<dbReference type="EMBL" id="AE014073">
    <property type="protein sequence ID" value="AAP17623.1"/>
    <property type="molecule type" value="Genomic_DNA"/>
</dbReference>
<dbReference type="RefSeq" id="NP_708099.2">
    <property type="nucleotide sequence ID" value="NC_004337.2"/>
</dbReference>
<dbReference type="RefSeq" id="WP_000835174.1">
    <property type="nucleotide sequence ID" value="NZ_WPGW01000022.1"/>
</dbReference>
<dbReference type="SMR" id="P0ABL4"/>
<dbReference type="STRING" id="198214.SF2287"/>
<dbReference type="PaxDb" id="198214-SF2287"/>
<dbReference type="GeneID" id="1025488"/>
<dbReference type="GeneID" id="93774975"/>
<dbReference type="KEGG" id="sfl:SF2287"/>
<dbReference type="KEGG" id="sfx:S2417"/>
<dbReference type="PATRIC" id="fig|198214.7.peg.2738"/>
<dbReference type="HOGENOM" id="CLU_103367_3_0_6"/>
<dbReference type="Proteomes" id="UP000001006">
    <property type="component" value="Chromosome"/>
</dbReference>
<dbReference type="Proteomes" id="UP000002673">
    <property type="component" value="Chromosome"/>
</dbReference>
<dbReference type="GO" id="GO:0042597">
    <property type="term" value="C:periplasmic space"/>
    <property type="evidence" value="ECO:0007669"/>
    <property type="project" value="UniProtKB-SubCell"/>
</dbReference>
<dbReference type="GO" id="GO:0046872">
    <property type="term" value="F:metal ion binding"/>
    <property type="evidence" value="ECO:0007669"/>
    <property type="project" value="UniProtKB-KW"/>
</dbReference>
<dbReference type="GO" id="GO:0009061">
    <property type="term" value="P:anaerobic respiration"/>
    <property type="evidence" value="ECO:0007669"/>
    <property type="project" value="InterPro"/>
</dbReference>
<dbReference type="FunFam" id="1.10.1130.10:FF:000001">
    <property type="entry name" value="Periplasmic nitrate reductase, electron transfer subunit"/>
    <property type="match status" value="1"/>
</dbReference>
<dbReference type="Gene3D" id="1.10.1130.10">
    <property type="entry name" value="Flavocytochrome C3, Chain A"/>
    <property type="match status" value="1"/>
</dbReference>
<dbReference type="InterPro" id="IPR036280">
    <property type="entry name" value="Multihaem_cyt_sf"/>
</dbReference>
<dbReference type="InterPro" id="IPR005591">
    <property type="entry name" value="NapB"/>
</dbReference>
<dbReference type="NCBIfam" id="NF008609">
    <property type="entry name" value="PRK11586.1"/>
    <property type="match status" value="1"/>
</dbReference>
<dbReference type="PANTHER" id="PTHR38604">
    <property type="entry name" value="PERIPLASMIC NITRATE REDUCTASE, ELECTRON TRANSFER SUBUNIT"/>
    <property type="match status" value="1"/>
</dbReference>
<dbReference type="PANTHER" id="PTHR38604:SF1">
    <property type="entry name" value="PERIPLASMIC NITRATE REDUCTASE, ELECTRON TRANSFER SUBUNIT"/>
    <property type="match status" value="1"/>
</dbReference>
<dbReference type="Pfam" id="PF03892">
    <property type="entry name" value="NapB"/>
    <property type="match status" value="1"/>
</dbReference>
<dbReference type="PIRSF" id="PIRSF006105">
    <property type="entry name" value="NapB"/>
    <property type="match status" value="1"/>
</dbReference>
<dbReference type="SUPFAM" id="SSF48695">
    <property type="entry name" value="Multiheme cytochromes"/>
    <property type="match status" value="1"/>
</dbReference>
<dbReference type="PROSITE" id="PS51008">
    <property type="entry name" value="MULTIHEME_CYTC"/>
    <property type="match status" value="1"/>
</dbReference>
<gene>
    <name type="primary">napB</name>
    <name type="ordered locus">SF2287</name>
    <name type="ordered locus">S2417</name>
</gene>
<protein>
    <recommendedName>
        <fullName>Periplasmic nitrate reductase, electron transfer subunit</fullName>
    </recommendedName>
    <alternativeName>
        <fullName>Diheme cytochrome c NapB</fullName>
    </alternativeName>
</protein>
<keyword id="KW-0249">Electron transport</keyword>
<keyword id="KW-0349">Heme</keyword>
<keyword id="KW-0408">Iron</keyword>
<keyword id="KW-0479">Metal-binding</keyword>
<keyword id="KW-0574">Periplasm</keyword>
<keyword id="KW-1185">Reference proteome</keyword>
<keyword id="KW-0732">Signal</keyword>
<keyword id="KW-0813">Transport</keyword>
<proteinExistence type="inferred from homology"/>
<evidence type="ECO:0000250" key="1"/>
<evidence type="ECO:0000255" key="2"/>
<evidence type="ECO:0000305" key="3"/>
<organism>
    <name type="scientific">Shigella flexneri</name>
    <dbReference type="NCBI Taxonomy" id="623"/>
    <lineage>
        <taxon>Bacteria</taxon>
        <taxon>Pseudomonadati</taxon>
        <taxon>Pseudomonadota</taxon>
        <taxon>Gammaproteobacteria</taxon>
        <taxon>Enterobacterales</taxon>
        <taxon>Enterobacteriaceae</taxon>
        <taxon>Shigella</taxon>
    </lineage>
</organism>
<reference key="1">
    <citation type="journal article" date="2002" name="Nucleic Acids Res.">
        <title>Genome sequence of Shigella flexneri 2a: insights into pathogenicity through comparison with genomes of Escherichia coli K12 and O157.</title>
        <authorList>
            <person name="Jin Q."/>
            <person name="Yuan Z."/>
            <person name="Xu J."/>
            <person name="Wang Y."/>
            <person name="Shen Y."/>
            <person name="Lu W."/>
            <person name="Wang J."/>
            <person name="Liu H."/>
            <person name="Yang J."/>
            <person name="Yang F."/>
            <person name="Zhang X."/>
            <person name="Zhang J."/>
            <person name="Yang G."/>
            <person name="Wu H."/>
            <person name="Qu D."/>
            <person name="Dong J."/>
            <person name="Sun L."/>
            <person name="Xue Y."/>
            <person name="Zhao A."/>
            <person name="Gao Y."/>
            <person name="Zhu J."/>
            <person name="Kan B."/>
            <person name="Ding K."/>
            <person name="Chen S."/>
            <person name="Cheng H."/>
            <person name="Yao Z."/>
            <person name="He B."/>
            <person name="Chen R."/>
            <person name="Ma D."/>
            <person name="Qiang B."/>
            <person name="Wen Y."/>
            <person name="Hou Y."/>
            <person name="Yu J."/>
        </authorList>
    </citation>
    <scope>NUCLEOTIDE SEQUENCE [LARGE SCALE GENOMIC DNA]</scope>
    <source>
        <strain>301 / Serotype 2a</strain>
    </source>
</reference>
<reference key="2">
    <citation type="journal article" date="2003" name="Infect. Immun.">
        <title>Complete genome sequence and comparative genomics of Shigella flexneri serotype 2a strain 2457T.</title>
        <authorList>
            <person name="Wei J."/>
            <person name="Goldberg M.B."/>
            <person name="Burland V."/>
            <person name="Venkatesan M.M."/>
            <person name="Deng W."/>
            <person name="Fournier G."/>
            <person name="Mayhew G.F."/>
            <person name="Plunkett G. III"/>
            <person name="Rose D.J."/>
            <person name="Darling A."/>
            <person name="Mau B."/>
            <person name="Perna N.T."/>
            <person name="Payne S.M."/>
            <person name="Runyen-Janecky L.J."/>
            <person name="Zhou S."/>
            <person name="Schwartz D.C."/>
            <person name="Blattner F.R."/>
        </authorList>
    </citation>
    <scope>NUCLEOTIDE SEQUENCE [LARGE SCALE GENOMIC DNA]</scope>
    <source>
        <strain>ATCC 700930 / 2457T / Serotype 2a</strain>
    </source>
</reference>
<sequence length="149" mass="16297">MKSHDLKKALCQWTAMLALVVSGAVWAANGVDFSQSPEVSGTQEGAIRMPKEQDRMPLNYVNQPPMIPHSVEGYQVTTNTNRCLQCHGVESYRTTGAPRISPTHFMDSDGKVGAEVAPRRYFCLQCHVPQADTAPIVGNTFTPSKGYGK</sequence>
<feature type="signal peptide" evidence="2">
    <location>
        <begin position="1"/>
        <end position="27"/>
    </location>
</feature>
<feature type="chain" id="PRO_0000042811" description="Periplasmic nitrate reductase, electron transfer subunit">
    <location>
        <begin position="28"/>
        <end position="149"/>
    </location>
</feature>
<feature type="binding site" description="axial binding residue" evidence="1">
    <location>
        <position position="69"/>
    </location>
    <ligand>
        <name>heme c</name>
        <dbReference type="ChEBI" id="CHEBI:61717"/>
        <label>1</label>
    </ligand>
    <ligandPart>
        <name>Fe</name>
        <dbReference type="ChEBI" id="CHEBI:18248"/>
    </ligandPart>
</feature>
<feature type="binding site" description="covalent" evidence="1">
    <location>
        <position position="83"/>
    </location>
    <ligand>
        <name>heme c</name>
        <dbReference type="ChEBI" id="CHEBI:61717"/>
        <label>1</label>
    </ligand>
</feature>
<feature type="binding site" description="covalent" evidence="1">
    <location>
        <position position="86"/>
    </location>
    <ligand>
        <name>heme c</name>
        <dbReference type="ChEBI" id="CHEBI:61717"/>
        <label>1</label>
    </ligand>
</feature>
<feature type="binding site" description="axial binding residue" evidence="1">
    <location>
        <position position="87"/>
    </location>
    <ligand>
        <name>heme c</name>
        <dbReference type="ChEBI" id="CHEBI:61717"/>
        <label>1</label>
    </ligand>
    <ligandPart>
        <name>Fe</name>
        <dbReference type="ChEBI" id="CHEBI:18248"/>
    </ligandPart>
</feature>
<feature type="binding site" description="axial binding residue" evidence="1">
    <location>
        <position position="104"/>
    </location>
    <ligand>
        <name>heme c</name>
        <dbReference type="ChEBI" id="CHEBI:61717"/>
        <label>2</label>
    </ligand>
    <ligandPart>
        <name>Fe</name>
        <dbReference type="ChEBI" id="CHEBI:18248"/>
    </ligandPart>
</feature>
<feature type="binding site" description="covalent" evidence="1">
    <location>
        <position position="123"/>
    </location>
    <ligand>
        <name>heme c</name>
        <dbReference type="ChEBI" id="CHEBI:61717"/>
        <label>2</label>
    </ligand>
</feature>
<feature type="binding site" description="covalent" evidence="1">
    <location>
        <position position="126"/>
    </location>
    <ligand>
        <name>heme c</name>
        <dbReference type="ChEBI" id="CHEBI:61717"/>
        <label>2</label>
    </ligand>
</feature>
<feature type="binding site" description="axial binding residue" evidence="1">
    <location>
        <position position="127"/>
    </location>
    <ligand>
        <name>heme c</name>
        <dbReference type="ChEBI" id="CHEBI:61717"/>
        <label>2</label>
    </ligand>
    <ligandPart>
        <name>Fe</name>
        <dbReference type="ChEBI" id="CHEBI:18248"/>
    </ligandPart>
</feature>
<accession>P0ABL4</accession>
<accession>P33933</accession>
<accession>P76453</accession>
<name>NAPB_SHIFL</name>